<name>ATPL_PETMO</name>
<keyword id="KW-0066">ATP synthesis</keyword>
<keyword id="KW-0997">Cell inner membrane</keyword>
<keyword id="KW-1003">Cell membrane</keyword>
<keyword id="KW-0138">CF(0)</keyword>
<keyword id="KW-0375">Hydrogen ion transport</keyword>
<keyword id="KW-0406">Ion transport</keyword>
<keyword id="KW-0446">Lipid-binding</keyword>
<keyword id="KW-0472">Membrane</keyword>
<keyword id="KW-0812">Transmembrane</keyword>
<keyword id="KW-1133">Transmembrane helix</keyword>
<keyword id="KW-0813">Transport</keyword>
<proteinExistence type="inferred from homology"/>
<protein>
    <recommendedName>
        <fullName evidence="1">ATP synthase subunit c</fullName>
    </recommendedName>
    <alternativeName>
        <fullName evidence="1">ATP synthase F(0) sector subunit c</fullName>
    </alternativeName>
    <alternativeName>
        <fullName evidence="1">F-type ATPase subunit c</fullName>
        <shortName evidence="1">F-ATPase subunit c</shortName>
    </alternativeName>
    <alternativeName>
        <fullName evidence="1">Lipid-binding protein</fullName>
    </alternativeName>
</protein>
<evidence type="ECO:0000255" key="1">
    <source>
        <dbReference type="HAMAP-Rule" id="MF_01396"/>
    </source>
</evidence>
<reference key="1">
    <citation type="submission" date="2007-11" db="EMBL/GenBank/DDBJ databases">
        <title>Complete sequence of Petroga mobilis SJ95.</title>
        <authorList>
            <consortium name="US DOE Joint Genome Institute"/>
            <person name="Copeland A."/>
            <person name="Lucas S."/>
            <person name="Lapidus A."/>
            <person name="Barry K."/>
            <person name="Glavina del Rio T."/>
            <person name="Dalin E."/>
            <person name="Tice H."/>
            <person name="Pitluck S."/>
            <person name="Meincke L."/>
            <person name="Brettin T."/>
            <person name="Bruce D."/>
            <person name="Detter J.C."/>
            <person name="Han C."/>
            <person name="Kuske C.R."/>
            <person name="Schmutz J."/>
            <person name="Larimer F."/>
            <person name="Land M."/>
            <person name="Hauser L."/>
            <person name="Kyrpides N."/>
            <person name="Mikhailova N."/>
            <person name="Noll K."/>
            <person name="Richardson P."/>
        </authorList>
    </citation>
    <scope>NUCLEOTIDE SEQUENCE [LARGE SCALE GENOMIC DNA]</scope>
    <source>
        <strain>DSM 10674 / SJ95</strain>
    </source>
</reference>
<sequence length="96" mass="9825">MDLATMLQNLVTEGGSIGWGLYYLGKLLGAGVAMGIGAIGPGVGEGNIGAHAMDAMARQPEMSGNLTTRMLLAMAVTESTGLYSLVVALILLFVLP</sequence>
<comment type="function">
    <text evidence="1">F(1)F(0) ATP synthase produces ATP from ADP in the presence of a proton or sodium gradient. F-type ATPases consist of two structural domains, F(1) containing the extramembraneous catalytic core and F(0) containing the membrane proton channel, linked together by a central stalk and a peripheral stalk. During catalysis, ATP synthesis in the catalytic domain of F(1) is coupled via a rotary mechanism of the central stalk subunits to proton translocation.</text>
</comment>
<comment type="function">
    <text evidence="1">Key component of the F(0) channel; it plays a direct role in translocation across the membrane. A homomeric c-ring of between 10-14 subunits forms the central stalk rotor element with the F(1) delta and epsilon subunits.</text>
</comment>
<comment type="subunit">
    <text evidence="1">F-type ATPases have 2 components, F(1) - the catalytic core - and F(0) - the membrane proton channel. F(1) has five subunits: alpha(3), beta(3), gamma(1), delta(1), epsilon(1). F(0) has three main subunits: a(1), b(2) and c(10-14). The alpha and beta chains form an alternating ring which encloses part of the gamma chain. F(1) is attached to F(0) by a central stalk formed by the gamma and epsilon chains, while a peripheral stalk is formed by the delta and b chains.</text>
</comment>
<comment type="subcellular location">
    <subcellularLocation>
        <location evidence="1">Cell inner membrane</location>
        <topology evidence="1">Multi-pass membrane protein</topology>
    </subcellularLocation>
</comment>
<comment type="similarity">
    <text evidence="1">Belongs to the ATPase C chain family.</text>
</comment>
<accession>A9BFX8</accession>
<feature type="chain" id="PRO_0000365909" description="ATP synthase subunit c">
    <location>
        <begin position="1"/>
        <end position="96"/>
    </location>
</feature>
<feature type="transmembrane region" description="Helical" evidence="1">
    <location>
        <begin position="28"/>
        <end position="50"/>
    </location>
</feature>
<feature type="transmembrane region" description="Helical" evidence="1">
    <location>
        <begin position="75"/>
        <end position="95"/>
    </location>
</feature>
<feature type="site" description="Reversibly protonated during proton transport" evidence="1">
    <location>
        <position position="78"/>
    </location>
</feature>
<organism>
    <name type="scientific">Petrotoga mobilis (strain DSM 10674 / SJ95)</name>
    <dbReference type="NCBI Taxonomy" id="403833"/>
    <lineage>
        <taxon>Bacteria</taxon>
        <taxon>Thermotogati</taxon>
        <taxon>Thermotogota</taxon>
        <taxon>Thermotogae</taxon>
        <taxon>Petrotogales</taxon>
        <taxon>Petrotogaceae</taxon>
        <taxon>Petrotoga</taxon>
    </lineage>
</organism>
<gene>
    <name evidence="1" type="primary">atpE</name>
    <name type="ordered locus">Pmob_0750</name>
</gene>
<dbReference type="EMBL" id="CP000879">
    <property type="protein sequence ID" value="ABX31474.1"/>
    <property type="molecule type" value="Genomic_DNA"/>
</dbReference>
<dbReference type="SMR" id="A9BFX8"/>
<dbReference type="STRING" id="403833.Pmob_0750"/>
<dbReference type="KEGG" id="pmo:Pmob_0750"/>
<dbReference type="eggNOG" id="COG0636">
    <property type="taxonomic scope" value="Bacteria"/>
</dbReference>
<dbReference type="HOGENOM" id="CLU_148047_2_1_0"/>
<dbReference type="Proteomes" id="UP000000789">
    <property type="component" value="Chromosome"/>
</dbReference>
<dbReference type="GO" id="GO:0005886">
    <property type="term" value="C:plasma membrane"/>
    <property type="evidence" value="ECO:0007669"/>
    <property type="project" value="UniProtKB-SubCell"/>
</dbReference>
<dbReference type="GO" id="GO:0045259">
    <property type="term" value="C:proton-transporting ATP synthase complex"/>
    <property type="evidence" value="ECO:0007669"/>
    <property type="project" value="UniProtKB-KW"/>
</dbReference>
<dbReference type="GO" id="GO:0033177">
    <property type="term" value="C:proton-transporting two-sector ATPase complex, proton-transporting domain"/>
    <property type="evidence" value="ECO:0007669"/>
    <property type="project" value="InterPro"/>
</dbReference>
<dbReference type="GO" id="GO:0008289">
    <property type="term" value="F:lipid binding"/>
    <property type="evidence" value="ECO:0007669"/>
    <property type="project" value="UniProtKB-KW"/>
</dbReference>
<dbReference type="GO" id="GO:0046933">
    <property type="term" value="F:proton-transporting ATP synthase activity, rotational mechanism"/>
    <property type="evidence" value="ECO:0007669"/>
    <property type="project" value="UniProtKB-UniRule"/>
</dbReference>
<dbReference type="CDD" id="cd18121">
    <property type="entry name" value="ATP-synt_Fo_c"/>
    <property type="match status" value="1"/>
</dbReference>
<dbReference type="FunFam" id="1.20.20.10:FF:000004">
    <property type="entry name" value="ATP synthase subunit c"/>
    <property type="match status" value="1"/>
</dbReference>
<dbReference type="Gene3D" id="1.20.20.10">
    <property type="entry name" value="F1F0 ATP synthase subunit C"/>
    <property type="match status" value="1"/>
</dbReference>
<dbReference type="HAMAP" id="MF_01396">
    <property type="entry name" value="ATP_synth_c_bact"/>
    <property type="match status" value="1"/>
</dbReference>
<dbReference type="InterPro" id="IPR005953">
    <property type="entry name" value="ATP_synth_csu_bac/chlpt"/>
</dbReference>
<dbReference type="InterPro" id="IPR000454">
    <property type="entry name" value="ATP_synth_F0_csu"/>
</dbReference>
<dbReference type="InterPro" id="IPR020537">
    <property type="entry name" value="ATP_synth_F0_csu_DDCD_BS"/>
</dbReference>
<dbReference type="InterPro" id="IPR038662">
    <property type="entry name" value="ATP_synth_F0_csu_sf"/>
</dbReference>
<dbReference type="InterPro" id="IPR002379">
    <property type="entry name" value="ATPase_proteolipid_c-like_dom"/>
</dbReference>
<dbReference type="InterPro" id="IPR035921">
    <property type="entry name" value="F/V-ATP_Csub_sf"/>
</dbReference>
<dbReference type="NCBIfam" id="TIGR01260">
    <property type="entry name" value="ATP_synt_c"/>
    <property type="match status" value="1"/>
</dbReference>
<dbReference type="NCBIfam" id="NF009999">
    <property type="entry name" value="PRK13471.1"/>
    <property type="match status" value="1"/>
</dbReference>
<dbReference type="PANTHER" id="PTHR10031">
    <property type="entry name" value="ATP SYNTHASE LIPID-BINDING PROTEIN, MITOCHONDRIAL"/>
    <property type="match status" value="1"/>
</dbReference>
<dbReference type="PANTHER" id="PTHR10031:SF0">
    <property type="entry name" value="ATPASE PROTEIN 9"/>
    <property type="match status" value="1"/>
</dbReference>
<dbReference type="Pfam" id="PF00137">
    <property type="entry name" value="ATP-synt_C"/>
    <property type="match status" value="1"/>
</dbReference>
<dbReference type="PRINTS" id="PR00124">
    <property type="entry name" value="ATPASEC"/>
</dbReference>
<dbReference type="SUPFAM" id="SSF81333">
    <property type="entry name" value="F1F0 ATP synthase subunit C"/>
    <property type="match status" value="1"/>
</dbReference>
<dbReference type="PROSITE" id="PS00605">
    <property type="entry name" value="ATPASE_C"/>
    <property type="match status" value="1"/>
</dbReference>